<sequence length="7" mass="725">KPVEPVG</sequence>
<dbReference type="GO" id="GO:0005576">
    <property type="term" value="C:extracellular region"/>
    <property type="evidence" value="ECO:0007669"/>
    <property type="project" value="UniProtKB-SubCell"/>
</dbReference>
<dbReference type="GO" id="GO:0031640">
    <property type="term" value="P:killing of cells of another organism"/>
    <property type="evidence" value="ECO:0007669"/>
    <property type="project" value="UniProtKB-KW"/>
</dbReference>
<reference key="1">
    <citation type="journal article" date="2018" name="J. Proteomics">
        <title>Profiling the short, linear, non-disulfide bond-containing peptidome from the venom of the scorpion Tityus obscurus.</title>
        <authorList>
            <person name="Dias N.B."/>
            <person name="de Souza B.M."/>
            <person name="Cocchi F.K."/>
            <person name="Chalkidis H.M."/>
            <person name="Dorce V.A.C."/>
            <person name="Palma M.S."/>
        </authorList>
    </citation>
    <scope>PROTEIN SEQUENCE</scope>
    <scope>IDENTIFICATION BY MASS SPECTROMETRY</scope>
    <scope>MASS SPECTROMETRY</scope>
    <scope>SUBCELLULAR LOCATION</scope>
    <scope>SYNTHESIS</scope>
    <scope>FUNCTION</scope>
    <scope>BIOASSAY</scope>
    <source>
        <tissue>Venom</tissue>
    </source>
</reference>
<feature type="peptide" id="PRO_0000461744" description="Cryptide Pep-9" evidence="1">
    <location>
        <begin position="1"/>
        <end position="7"/>
    </location>
</feature>
<organism>
    <name type="scientific">Tityus obscurus</name>
    <name type="common">Amazonian scorpion</name>
    <name type="synonym">Tityus cambridgei</name>
    <dbReference type="NCBI Taxonomy" id="1221240"/>
    <lineage>
        <taxon>Eukaryota</taxon>
        <taxon>Metazoa</taxon>
        <taxon>Ecdysozoa</taxon>
        <taxon>Arthropoda</taxon>
        <taxon>Chelicerata</taxon>
        <taxon>Arachnida</taxon>
        <taxon>Scorpiones</taxon>
        <taxon>Buthida</taxon>
        <taxon>Buthoidea</taxon>
        <taxon>Buthidae</taxon>
        <taxon>Tityus</taxon>
    </lineage>
</organism>
<proteinExistence type="evidence at protein level"/>
<protein>
    <recommendedName>
        <fullName evidence="2">Cryptide Pep-9</fullName>
    </recommendedName>
</protein>
<evidence type="ECO:0000269" key="1">
    <source>
    </source>
</evidence>
<evidence type="ECO:0000303" key="2">
    <source>
    </source>
</evidence>
<evidence type="ECO:0000305" key="3">
    <source>
    </source>
</evidence>
<accession>P0DRF4</accession>
<name>CRY9_TITOB</name>
<keyword id="KW-0204">Cytolysis</keyword>
<keyword id="KW-0903">Direct protein sequencing</keyword>
<keyword id="KW-0964">Secreted</keyword>
<comment type="function">
    <text evidence="1">Presents moderate hemolytic activity at physiological concentrations (micromolar range), and weak lactate dehydrogenase (LDH) release from mast cells. Does not induce mast cell degranulation, and antimicrobial effects. In vivo, injection into mice causes moderate edema formation, but induces very weak or no change in nociceptive sensibility. It also causes an alteration in rearing (standing on hind limbs), but does not impact locomotion.</text>
</comment>
<comment type="subcellular location">
    <subcellularLocation>
        <location evidence="1">Secreted</location>
    </subcellularLocation>
</comment>
<comment type="tissue specificity">
    <text evidence="3">Expressed by the venom gland.</text>
</comment>
<comment type="mass spectrometry" mass="724.47" method="Electrospray" evidence="1"/>